<organism>
    <name type="scientific">Enterobacteria phage T3</name>
    <name type="common">Bacteriophage T3</name>
    <dbReference type="NCBI Taxonomy" id="10759"/>
    <lineage>
        <taxon>Viruses</taxon>
        <taxon>Duplodnaviria</taxon>
        <taxon>Heunggongvirae</taxon>
        <taxon>Uroviricota</taxon>
        <taxon>Caudoviricetes</taxon>
        <taxon>Autographiviridae</taxon>
        <taxon>Studiervirinae</taxon>
        <taxon>Teetrevirus</taxon>
        <taxon>Teetrevirus T3</taxon>
    </lineage>
</organism>
<proteinExistence type="predicted"/>
<sequence>MCWKPKVKVPKMDTNQIRAAEPAPLTEPPKSVVWGGDDDEDTSVSSSEVPTTPSSGKSSLKVKLDDSAAKNKSKSSIRSKAFG</sequence>
<protein>
    <recommendedName>
        <fullName>Uncharacterized gene 6.7 protein</fullName>
    </recommendedName>
</protein>
<name>Y67_BPT3</name>
<evidence type="ECO:0000256" key="1">
    <source>
        <dbReference type="SAM" id="MobiDB-lite"/>
    </source>
</evidence>
<gene>
    <name type="primary">6.7</name>
</gene>
<accession>P20330</accession>
<dbReference type="EMBL" id="X17255">
    <property type="protein sequence ID" value="CAA35150.1"/>
    <property type="molecule type" value="Genomic_DNA"/>
</dbReference>
<dbReference type="PIR" id="S07519">
    <property type="entry name" value="S07519"/>
</dbReference>
<dbReference type="RefSeq" id="NP_523330.1">
    <property type="nucleotide sequence ID" value="NC_003298.1"/>
</dbReference>
<dbReference type="KEGG" id="vg:927428"/>
<dbReference type="OrthoDB" id="26735at10239"/>
<dbReference type="InterPro" id="IPR020134">
    <property type="entry name" value="Phage_T7-like_6.7"/>
</dbReference>
<dbReference type="Pfam" id="PF17570">
    <property type="entry name" value="T7-like_gp67"/>
    <property type="match status" value="1"/>
</dbReference>
<feature type="chain" id="PRO_0000106510" description="Uncharacterized gene 6.7 protein">
    <location>
        <begin position="1"/>
        <end position="83"/>
    </location>
</feature>
<feature type="region of interest" description="Disordered" evidence="1">
    <location>
        <begin position="1"/>
        <end position="83"/>
    </location>
</feature>
<feature type="compositionally biased region" description="Low complexity" evidence="1">
    <location>
        <begin position="43"/>
        <end position="55"/>
    </location>
</feature>
<organismHost>
    <name type="scientific">Escherichia coli</name>
    <dbReference type="NCBI Taxonomy" id="562"/>
</organismHost>
<reference key="1">
    <citation type="journal article" date="1989" name="J. Mol. Biol.">
        <title>Sequence of bacteriophage T3 DNA from gene 2.5 through gene 9.</title>
        <authorList>
            <person name="Beck P.J."/>
            <person name="Gonzalez S."/>
            <person name="Ward C.L."/>
            <person name="Molineux I.J."/>
        </authorList>
    </citation>
    <scope>NUCLEOTIDE SEQUENCE [GENOMIC DNA]</scope>
    <source>
        <strain>Luria</strain>
    </source>
</reference>